<keyword id="KW-0106">Calcium</keyword>
<keyword id="KW-0903">Direct protein sequencing</keyword>
<keyword id="KW-0349">Heme</keyword>
<keyword id="KW-0376">Hydrogen peroxide</keyword>
<keyword id="KW-0408">Iron</keyword>
<keyword id="KW-0479">Metal-binding</keyword>
<keyword id="KW-0560">Oxidoreductase</keyword>
<keyword id="KW-0575">Peroxidase</keyword>
<name>PER10_DAUCA</name>
<comment type="function">
    <text evidence="2">Removal of H(2)O(2), oxidation of toxic reductants, biosynthesis and degradation of lignin, suberization, auxin catabolism, response to environmental stresses such as wounding, pathogen attack and oxidative stress. These functions might be dependent on each isozyme/isoform in each plant tissue.</text>
</comment>
<comment type="catalytic activity">
    <reaction>
        <text>2 a phenolic donor + H2O2 = 2 a phenolic radical donor + 2 H2O</text>
        <dbReference type="Rhea" id="RHEA:56136"/>
        <dbReference type="ChEBI" id="CHEBI:15377"/>
        <dbReference type="ChEBI" id="CHEBI:16240"/>
        <dbReference type="ChEBI" id="CHEBI:139520"/>
        <dbReference type="ChEBI" id="CHEBI:139521"/>
        <dbReference type="EC" id="1.11.1.7"/>
    </reaction>
</comment>
<comment type="cofactor">
    <cofactor evidence="1 2">
        <name>Ca(2+)</name>
        <dbReference type="ChEBI" id="CHEBI:29108"/>
    </cofactor>
    <text evidence="1 2">Binds 2 calcium ions per subunit.</text>
</comment>
<comment type="cofactor">
    <cofactor evidence="1 2">
        <name>heme b</name>
        <dbReference type="ChEBI" id="CHEBI:60344"/>
    </cofactor>
    <text evidence="1 2">Binds 1 heme b (iron(II)-protoporphyrin IX) group per subunit.</text>
</comment>
<comment type="similarity">
    <text evidence="2">Belongs to the peroxidase family. Classical plant (class III) peroxidase subfamily.</text>
</comment>
<organism>
    <name type="scientific">Daucus carota</name>
    <name type="common">Wild carrot</name>
    <dbReference type="NCBI Taxonomy" id="4039"/>
    <lineage>
        <taxon>Eukaryota</taxon>
        <taxon>Viridiplantae</taxon>
        <taxon>Streptophyta</taxon>
        <taxon>Embryophyta</taxon>
        <taxon>Tracheophyta</taxon>
        <taxon>Spermatophyta</taxon>
        <taxon>Magnoliopsida</taxon>
        <taxon>eudicotyledons</taxon>
        <taxon>Gunneridae</taxon>
        <taxon>Pentapetalae</taxon>
        <taxon>asterids</taxon>
        <taxon>campanulids</taxon>
        <taxon>Apiales</taxon>
        <taxon>Apiaceae</taxon>
        <taxon>Apioideae</taxon>
        <taxon>Scandiceae</taxon>
        <taxon>Daucinae</taxon>
        <taxon>Daucus</taxon>
        <taxon>Daucus sect. Daucus</taxon>
    </lineage>
</organism>
<sequence length="15" mass="1746">QGLFTSDQDLYTDSR</sequence>
<proteinExistence type="evidence at protein level"/>
<evidence type="ECO:0000250" key="1">
    <source>
        <dbReference type="UniProtKB" id="Q9SZE7"/>
    </source>
</evidence>
<evidence type="ECO:0000255" key="2">
    <source>
        <dbReference type="PROSITE-ProRule" id="PRU00297"/>
    </source>
</evidence>
<evidence type="ECO:0000305" key="3"/>
<reference evidence="3" key="1">
    <citation type="submission" date="2008-07" db="UniProtKB">
        <authorList>
            <person name="Sabater Jara A.B."/>
            <person name="Almagro L."/>
            <person name="Bru R."/>
            <person name="Pedreno M.A."/>
        </authorList>
    </citation>
    <scope>PROTEIN SEQUENCE</scope>
</reference>
<dbReference type="EC" id="1.11.1.7"/>
<dbReference type="GO" id="GO:0140825">
    <property type="term" value="F:lactoperoxidase activity"/>
    <property type="evidence" value="ECO:0007669"/>
    <property type="project" value="UniProtKB-EC"/>
</dbReference>
<dbReference type="GO" id="GO:0046872">
    <property type="term" value="F:metal ion binding"/>
    <property type="evidence" value="ECO:0007669"/>
    <property type="project" value="UniProtKB-KW"/>
</dbReference>
<dbReference type="GO" id="GO:0042744">
    <property type="term" value="P:hydrogen peroxide catabolic process"/>
    <property type="evidence" value="ECO:0007669"/>
    <property type="project" value="UniProtKB-KW"/>
</dbReference>
<accession>P86067</accession>
<protein>
    <recommendedName>
        <fullName evidence="1">Peroxidase 10</fullName>
        <ecNumber>1.11.1.7</ecNumber>
    </recommendedName>
</protein>
<feature type="chain" id="PRO_0000355602" description="Peroxidase 10">
    <location>
        <begin position="1" status="less than"/>
        <end position="15" status="greater than"/>
    </location>
</feature>
<feature type="unsure residue" description="Q or K">
    <location>
        <position position="1"/>
    </location>
</feature>
<feature type="unsure residue" description="L or I">
    <location>
        <position position="3"/>
    </location>
</feature>
<feature type="unsure residue" description="F or M">
    <location>
        <position position="4"/>
    </location>
</feature>
<feature type="unsure residue" description="Q or K">
    <location>
        <position position="8"/>
    </location>
</feature>
<feature type="unsure residue" description="L or I">
    <location>
        <position position="10"/>
    </location>
</feature>
<feature type="non-terminal residue">
    <location>
        <position position="1"/>
    </location>
</feature>
<feature type="non-terminal residue">
    <location>
        <position position="15"/>
    </location>
</feature>